<protein>
    <recommendedName>
        <fullName evidence="1">Isoprenyl transferase 2</fullName>
        <ecNumber evidence="1">2.5.1.-</ecNumber>
    </recommendedName>
</protein>
<accession>Q8NNC1</accession>
<name>ISPT2_CORGL</name>
<dbReference type="EC" id="2.5.1.-" evidence="1"/>
<dbReference type="EMBL" id="BA000036">
    <property type="protein sequence ID" value="BAB99676.1"/>
    <property type="molecule type" value="Genomic_DNA"/>
</dbReference>
<dbReference type="EMBL" id="BX927154">
    <property type="protein sequence ID" value="CAF20625.1"/>
    <property type="molecule type" value="Genomic_DNA"/>
</dbReference>
<dbReference type="RefSeq" id="NP_601483.1">
    <property type="nucleotide sequence ID" value="NC_003450.3"/>
</dbReference>
<dbReference type="RefSeq" id="WP_011015010.1">
    <property type="nucleotide sequence ID" value="NC_006958.1"/>
</dbReference>
<dbReference type="SMR" id="Q8NNC1"/>
<dbReference type="STRING" id="196627.cg2508"/>
<dbReference type="KEGG" id="cgb:cg2508"/>
<dbReference type="KEGG" id="cgl:Cgl2283"/>
<dbReference type="PATRIC" id="fig|196627.13.peg.2217"/>
<dbReference type="eggNOG" id="COG0020">
    <property type="taxonomic scope" value="Bacteria"/>
</dbReference>
<dbReference type="HOGENOM" id="CLU_038505_1_2_11"/>
<dbReference type="OrthoDB" id="4191603at2"/>
<dbReference type="BioCyc" id="CORYNE:G18NG-11880-MONOMER"/>
<dbReference type="BRENDA" id="2.5.1.86">
    <property type="organism ID" value="960"/>
</dbReference>
<dbReference type="Proteomes" id="UP000000582">
    <property type="component" value="Chromosome"/>
</dbReference>
<dbReference type="Proteomes" id="UP000001009">
    <property type="component" value="Chromosome"/>
</dbReference>
<dbReference type="GO" id="GO:0005829">
    <property type="term" value="C:cytosol"/>
    <property type="evidence" value="ECO:0007669"/>
    <property type="project" value="TreeGrafter"/>
</dbReference>
<dbReference type="GO" id="GO:0005886">
    <property type="term" value="C:plasma membrane"/>
    <property type="evidence" value="ECO:0007669"/>
    <property type="project" value="TreeGrafter"/>
</dbReference>
<dbReference type="GO" id="GO:0008834">
    <property type="term" value="F:ditrans,polycis-undecaprenyl-diphosphate synthase [(2E,6E)-farnesyl-diphosphate specific] activity"/>
    <property type="evidence" value="ECO:0007669"/>
    <property type="project" value="TreeGrafter"/>
</dbReference>
<dbReference type="GO" id="GO:0000287">
    <property type="term" value="F:magnesium ion binding"/>
    <property type="evidence" value="ECO:0007669"/>
    <property type="project" value="UniProtKB-UniRule"/>
</dbReference>
<dbReference type="GO" id="GO:0030145">
    <property type="term" value="F:manganese ion binding"/>
    <property type="evidence" value="ECO:0007669"/>
    <property type="project" value="TreeGrafter"/>
</dbReference>
<dbReference type="GO" id="GO:0033850">
    <property type="term" value="F:Z-farnesyl diphosphate synthase activity"/>
    <property type="evidence" value="ECO:0007669"/>
    <property type="project" value="TreeGrafter"/>
</dbReference>
<dbReference type="GO" id="GO:0016094">
    <property type="term" value="P:polyprenol biosynthetic process"/>
    <property type="evidence" value="ECO:0007669"/>
    <property type="project" value="TreeGrafter"/>
</dbReference>
<dbReference type="CDD" id="cd00475">
    <property type="entry name" value="Cis_IPPS"/>
    <property type="match status" value="1"/>
</dbReference>
<dbReference type="FunFam" id="3.40.1180.10:FF:000001">
    <property type="entry name" value="(2E,6E)-farnesyl-diphosphate-specific ditrans,polycis-undecaprenyl-diphosphate synthase"/>
    <property type="match status" value="1"/>
</dbReference>
<dbReference type="Gene3D" id="3.40.1180.10">
    <property type="entry name" value="Decaprenyl diphosphate synthase-like"/>
    <property type="match status" value="1"/>
</dbReference>
<dbReference type="HAMAP" id="MF_01139">
    <property type="entry name" value="ISPT"/>
    <property type="match status" value="1"/>
</dbReference>
<dbReference type="InterPro" id="IPR001441">
    <property type="entry name" value="UPP_synth-like"/>
</dbReference>
<dbReference type="InterPro" id="IPR018520">
    <property type="entry name" value="UPP_synth-like_CS"/>
</dbReference>
<dbReference type="InterPro" id="IPR036424">
    <property type="entry name" value="UPP_synth-like_sf"/>
</dbReference>
<dbReference type="NCBIfam" id="NF011404">
    <property type="entry name" value="PRK14829.1"/>
    <property type="match status" value="1"/>
</dbReference>
<dbReference type="NCBIfam" id="TIGR00055">
    <property type="entry name" value="uppS"/>
    <property type="match status" value="1"/>
</dbReference>
<dbReference type="PANTHER" id="PTHR10291:SF0">
    <property type="entry name" value="DEHYDRODOLICHYL DIPHOSPHATE SYNTHASE 2"/>
    <property type="match status" value="1"/>
</dbReference>
<dbReference type="PANTHER" id="PTHR10291">
    <property type="entry name" value="DEHYDRODOLICHYL DIPHOSPHATE SYNTHASE FAMILY MEMBER"/>
    <property type="match status" value="1"/>
</dbReference>
<dbReference type="Pfam" id="PF01255">
    <property type="entry name" value="Prenyltransf"/>
    <property type="match status" value="1"/>
</dbReference>
<dbReference type="SUPFAM" id="SSF64005">
    <property type="entry name" value="Undecaprenyl diphosphate synthase"/>
    <property type="match status" value="1"/>
</dbReference>
<dbReference type="PROSITE" id="PS01066">
    <property type="entry name" value="UPP_SYNTHASE"/>
    <property type="match status" value="1"/>
</dbReference>
<organism>
    <name type="scientific">Corynebacterium glutamicum (strain ATCC 13032 / DSM 20300 / JCM 1318 / BCRC 11384 / CCUG 27702 / LMG 3730 / NBRC 12168 / NCIMB 10025 / NRRL B-2784 / 534)</name>
    <dbReference type="NCBI Taxonomy" id="196627"/>
    <lineage>
        <taxon>Bacteria</taxon>
        <taxon>Bacillati</taxon>
        <taxon>Actinomycetota</taxon>
        <taxon>Actinomycetes</taxon>
        <taxon>Mycobacteriales</taxon>
        <taxon>Corynebacteriaceae</taxon>
        <taxon>Corynebacterium</taxon>
    </lineage>
</organism>
<proteinExistence type="inferred from homology"/>
<reference key="1">
    <citation type="journal article" date="2003" name="Appl. Microbiol. Biotechnol.">
        <title>The Corynebacterium glutamicum genome: features and impacts on biotechnological processes.</title>
        <authorList>
            <person name="Ikeda M."/>
            <person name="Nakagawa S."/>
        </authorList>
    </citation>
    <scope>NUCLEOTIDE SEQUENCE [LARGE SCALE GENOMIC DNA]</scope>
    <source>
        <strain>ATCC 13032 / DSM 20300 / JCM 1318 / BCRC 11384 / CCUG 27702 / LMG 3730 / NBRC 12168 / NCIMB 10025 / NRRL B-2784 / 534</strain>
    </source>
</reference>
<reference key="2">
    <citation type="journal article" date="2003" name="J. Biotechnol.">
        <title>The complete Corynebacterium glutamicum ATCC 13032 genome sequence and its impact on the production of L-aspartate-derived amino acids and vitamins.</title>
        <authorList>
            <person name="Kalinowski J."/>
            <person name="Bathe B."/>
            <person name="Bartels D."/>
            <person name="Bischoff N."/>
            <person name="Bott M."/>
            <person name="Burkovski A."/>
            <person name="Dusch N."/>
            <person name="Eggeling L."/>
            <person name="Eikmanns B.J."/>
            <person name="Gaigalat L."/>
            <person name="Goesmann A."/>
            <person name="Hartmann M."/>
            <person name="Huthmacher K."/>
            <person name="Kraemer R."/>
            <person name="Linke B."/>
            <person name="McHardy A.C."/>
            <person name="Meyer F."/>
            <person name="Moeckel B."/>
            <person name="Pfefferle W."/>
            <person name="Puehler A."/>
            <person name="Rey D.A."/>
            <person name="Rueckert C."/>
            <person name="Rupp O."/>
            <person name="Sahm H."/>
            <person name="Wendisch V.F."/>
            <person name="Wiegraebe I."/>
            <person name="Tauch A."/>
        </authorList>
    </citation>
    <scope>NUCLEOTIDE SEQUENCE [LARGE SCALE GENOMIC DNA]</scope>
    <source>
        <strain>ATCC 13032 / DSM 20300 / JCM 1318 / BCRC 11384 / CCUG 27702 / LMG 3730 / NBRC 12168 / NCIMB 10025 / NRRL B-2784 / 534</strain>
    </source>
</reference>
<comment type="function">
    <text evidence="1">Catalyzes the condensation of isopentenyl diphosphate (IPP) with allylic pyrophosphates generating different type of terpenoids.</text>
</comment>
<comment type="cofactor">
    <cofactor evidence="1">
        <name>Mg(2+)</name>
        <dbReference type="ChEBI" id="CHEBI:18420"/>
    </cofactor>
    <text evidence="1">Binds 2 magnesium ions per subunit.</text>
</comment>
<comment type="subunit">
    <text evidence="1">Homodimer.</text>
</comment>
<comment type="similarity">
    <text evidence="1">Belongs to the UPP synthase family.</text>
</comment>
<feature type="chain" id="PRO_0000123606" description="Isoprenyl transferase 2">
    <location>
        <begin position="1"/>
        <end position="243"/>
    </location>
</feature>
<feature type="active site" evidence="1">
    <location>
        <position position="23"/>
    </location>
</feature>
<feature type="active site" description="Proton acceptor" evidence="1">
    <location>
        <position position="71"/>
    </location>
</feature>
<feature type="binding site" evidence="1">
    <location>
        <position position="23"/>
    </location>
    <ligand>
        <name>Mg(2+)</name>
        <dbReference type="ChEBI" id="CHEBI:18420"/>
    </ligand>
</feature>
<feature type="binding site" evidence="1">
    <location>
        <begin position="24"/>
        <end position="27"/>
    </location>
    <ligand>
        <name>substrate</name>
    </ligand>
</feature>
<feature type="binding site" evidence="1">
    <location>
        <position position="28"/>
    </location>
    <ligand>
        <name>substrate</name>
    </ligand>
</feature>
<feature type="binding site" evidence="1">
    <location>
        <position position="36"/>
    </location>
    <ligand>
        <name>substrate</name>
    </ligand>
</feature>
<feature type="binding site" evidence="1">
    <location>
        <position position="40"/>
    </location>
    <ligand>
        <name>substrate</name>
    </ligand>
</feature>
<feature type="binding site" evidence="1">
    <location>
        <begin position="68"/>
        <end position="70"/>
    </location>
    <ligand>
        <name>substrate</name>
    </ligand>
</feature>
<feature type="binding site" evidence="1">
    <location>
        <position position="72"/>
    </location>
    <ligand>
        <name>substrate</name>
    </ligand>
</feature>
<feature type="binding site" evidence="1">
    <location>
        <position position="74"/>
    </location>
    <ligand>
        <name>substrate</name>
    </ligand>
</feature>
<feature type="binding site" evidence="1">
    <location>
        <position position="191"/>
    </location>
    <ligand>
        <name>substrate</name>
    </ligand>
</feature>
<feature type="binding site" evidence="1">
    <location>
        <begin position="197"/>
        <end position="199"/>
    </location>
    <ligand>
        <name>substrate</name>
    </ligand>
</feature>
<feature type="binding site" evidence="1">
    <location>
        <position position="210"/>
    </location>
    <ligand>
        <name>Mg(2+)</name>
        <dbReference type="ChEBI" id="CHEBI:18420"/>
    </ligand>
</feature>
<sequence length="243" mass="28226">MSEFQVPEIPAQFLPKHIALVMDGNGRWATERGMKRTEGHKRGEAVLLDVVDACIELGVPYLSAYAFSTENWRRSTDEVRFLMGFNRDVLRRQRDDLHEKGVRVRWVGRRPRLWRSVIRELETAEELTKDNTTMTLAMCVNYGGRAEIIDAARDIARLAAEGKLRPEQITEKTFPNFLDEPDMPDVDLFLRPSGEKRTSNFLLWQSAYAEMVYQDKLFPDFTQQDLYDAVLEYAKRDRRFGSA</sequence>
<evidence type="ECO:0000255" key="1">
    <source>
        <dbReference type="HAMAP-Rule" id="MF_01139"/>
    </source>
</evidence>
<gene>
    <name evidence="1" type="primary">uppS2</name>
    <name type="ordered locus">Cgl2283</name>
    <name type="ordered locus">cg2508</name>
</gene>
<keyword id="KW-0460">Magnesium</keyword>
<keyword id="KW-0479">Metal-binding</keyword>
<keyword id="KW-1185">Reference proteome</keyword>
<keyword id="KW-0808">Transferase</keyword>